<dbReference type="EMBL" id="CP000884">
    <property type="protein sequence ID" value="ABX33046.1"/>
    <property type="molecule type" value="Genomic_DNA"/>
</dbReference>
<dbReference type="RefSeq" id="WP_012202338.1">
    <property type="nucleotide sequence ID" value="NC_010002.1"/>
</dbReference>
<dbReference type="SMR" id="A9BPS7"/>
<dbReference type="STRING" id="398578.Daci_0400"/>
<dbReference type="GeneID" id="24113632"/>
<dbReference type="KEGG" id="dac:Daci_0400"/>
<dbReference type="eggNOG" id="COG0186">
    <property type="taxonomic scope" value="Bacteria"/>
</dbReference>
<dbReference type="HOGENOM" id="CLU_073626_1_1_4"/>
<dbReference type="Proteomes" id="UP000000784">
    <property type="component" value="Chromosome"/>
</dbReference>
<dbReference type="GO" id="GO:0022627">
    <property type="term" value="C:cytosolic small ribosomal subunit"/>
    <property type="evidence" value="ECO:0007669"/>
    <property type="project" value="TreeGrafter"/>
</dbReference>
<dbReference type="GO" id="GO:0019843">
    <property type="term" value="F:rRNA binding"/>
    <property type="evidence" value="ECO:0007669"/>
    <property type="project" value="UniProtKB-UniRule"/>
</dbReference>
<dbReference type="GO" id="GO:0003735">
    <property type="term" value="F:structural constituent of ribosome"/>
    <property type="evidence" value="ECO:0007669"/>
    <property type="project" value="InterPro"/>
</dbReference>
<dbReference type="GO" id="GO:0006412">
    <property type="term" value="P:translation"/>
    <property type="evidence" value="ECO:0007669"/>
    <property type="project" value="UniProtKB-UniRule"/>
</dbReference>
<dbReference type="CDD" id="cd00364">
    <property type="entry name" value="Ribosomal_uS17"/>
    <property type="match status" value="1"/>
</dbReference>
<dbReference type="Gene3D" id="2.40.50.140">
    <property type="entry name" value="Nucleic acid-binding proteins"/>
    <property type="match status" value="1"/>
</dbReference>
<dbReference type="HAMAP" id="MF_01345_B">
    <property type="entry name" value="Ribosomal_uS17_B"/>
    <property type="match status" value="1"/>
</dbReference>
<dbReference type="InterPro" id="IPR012340">
    <property type="entry name" value="NA-bd_OB-fold"/>
</dbReference>
<dbReference type="InterPro" id="IPR000266">
    <property type="entry name" value="Ribosomal_uS17"/>
</dbReference>
<dbReference type="InterPro" id="IPR019984">
    <property type="entry name" value="Ribosomal_uS17_bact/chlr"/>
</dbReference>
<dbReference type="InterPro" id="IPR019979">
    <property type="entry name" value="Ribosomal_uS17_CS"/>
</dbReference>
<dbReference type="NCBIfam" id="NF004123">
    <property type="entry name" value="PRK05610.1"/>
    <property type="match status" value="1"/>
</dbReference>
<dbReference type="NCBIfam" id="TIGR03635">
    <property type="entry name" value="uS17_bact"/>
    <property type="match status" value="1"/>
</dbReference>
<dbReference type="PANTHER" id="PTHR10744">
    <property type="entry name" value="40S RIBOSOMAL PROTEIN S11 FAMILY MEMBER"/>
    <property type="match status" value="1"/>
</dbReference>
<dbReference type="PANTHER" id="PTHR10744:SF1">
    <property type="entry name" value="SMALL RIBOSOMAL SUBUNIT PROTEIN US17M"/>
    <property type="match status" value="1"/>
</dbReference>
<dbReference type="Pfam" id="PF00366">
    <property type="entry name" value="Ribosomal_S17"/>
    <property type="match status" value="1"/>
</dbReference>
<dbReference type="PRINTS" id="PR00973">
    <property type="entry name" value="RIBOSOMALS17"/>
</dbReference>
<dbReference type="SUPFAM" id="SSF50249">
    <property type="entry name" value="Nucleic acid-binding proteins"/>
    <property type="match status" value="1"/>
</dbReference>
<dbReference type="PROSITE" id="PS00056">
    <property type="entry name" value="RIBOSOMAL_S17"/>
    <property type="match status" value="1"/>
</dbReference>
<feature type="chain" id="PRO_1000143246" description="Small ribosomal subunit protein uS17">
    <location>
        <begin position="1"/>
        <end position="89"/>
    </location>
</feature>
<gene>
    <name evidence="1" type="primary">rpsQ</name>
    <name type="ordered locus">Daci_0400</name>
</gene>
<reference key="1">
    <citation type="submission" date="2007-11" db="EMBL/GenBank/DDBJ databases">
        <title>Complete sequence of Delftia acidovorans DSM 14801 / SPH-1.</title>
        <authorList>
            <person name="Copeland A."/>
            <person name="Lucas S."/>
            <person name="Lapidus A."/>
            <person name="Barry K."/>
            <person name="Glavina del Rio T."/>
            <person name="Dalin E."/>
            <person name="Tice H."/>
            <person name="Pitluck S."/>
            <person name="Lowry S."/>
            <person name="Clum A."/>
            <person name="Schmutz J."/>
            <person name="Larimer F."/>
            <person name="Land M."/>
            <person name="Hauser L."/>
            <person name="Kyrpides N."/>
            <person name="Kim E."/>
            <person name="Schleheck D."/>
            <person name="Richardson P."/>
        </authorList>
    </citation>
    <scope>NUCLEOTIDE SEQUENCE [LARGE SCALE GENOMIC DNA]</scope>
    <source>
        <strain>DSM 14801 / SPH-1</strain>
    </source>
</reference>
<organism>
    <name type="scientific">Delftia acidovorans (strain DSM 14801 / SPH-1)</name>
    <dbReference type="NCBI Taxonomy" id="398578"/>
    <lineage>
        <taxon>Bacteria</taxon>
        <taxon>Pseudomonadati</taxon>
        <taxon>Pseudomonadota</taxon>
        <taxon>Betaproteobacteria</taxon>
        <taxon>Burkholderiales</taxon>
        <taxon>Comamonadaceae</taxon>
        <taxon>Delftia</taxon>
    </lineage>
</organism>
<name>RS17_DELAS</name>
<proteinExistence type="inferred from homology"/>
<sequence length="89" mass="10193">MTEAKKSLKRTLIGKVVSDKRAKTVTVMVERRVKHPIYDKIMIKSSKYHAHDEQGEYKLGDVVEITESRPLSKTKNWVATRLVQKAALV</sequence>
<evidence type="ECO:0000255" key="1">
    <source>
        <dbReference type="HAMAP-Rule" id="MF_01345"/>
    </source>
</evidence>
<evidence type="ECO:0000305" key="2"/>
<protein>
    <recommendedName>
        <fullName evidence="1">Small ribosomal subunit protein uS17</fullName>
    </recommendedName>
    <alternativeName>
        <fullName evidence="2">30S ribosomal protein S17</fullName>
    </alternativeName>
</protein>
<accession>A9BPS7</accession>
<keyword id="KW-1185">Reference proteome</keyword>
<keyword id="KW-0687">Ribonucleoprotein</keyword>
<keyword id="KW-0689">Ribosomal protein</keyword>
<keyword id="KW-0694">RNA-binding</keyword>
<keyword id="KW-0699">rRNA-binding</keyword>
<comment type="function">
    <text evidence="1">One of the primary rRNA binding proteins, it binds specifically to the 5'-end of 16S ribosomal RNA.</text>
</comment>
<comment type="subunit">
    <text evidence="1">Part of the 30S ribosomal subunit.</text>
</comment>
<comment type="similarity">
    <text evidence="1">Belongs to the universal ribosomal protein uS17 family.</text>
</comment>